<protein>
    <recommendedName>
        <fullName evidence="1">Cytidine deaminase</fullName>
        <ecNumber evidence="1">3.5.4.5</ecNumber>
    </recommendedName>
    <alternativeName>
        <fullName evidence="1">Cytidine aminohydrolase</fullName>
        <shortName evidence="1">CDA</shortName>
    </alternativeName>
</protein>
<sequence>MRNRIEQALQQMPASFAPYLRELVLAKDFDATFSAEQYQQLLTLSGLEDADLRVALLPIAAAYSYAPISEFYVGAIVRGISGRLYLGANMEFTGAQLGQTVHAEQCAISHAWMKGEKGVADITINFSPCGHCRQFMNELTTASSLKIQLPKRAAKTLQEYLPESFGPADLGIDSGLMSPVNHGKTSDDDEELIQQALRAMNISHSPYTQNFSGVALKMRSGAIYLGAYAENAAFNPSLPPLQVALAQAMMMGESFEDIEAAALVESATGKISHLADTQATLEVINPDIPLSYLSL</sequence>
<gene>
    <name evidence="1" type="primary">cdd</name>
    <name type="ordered locus">VC_1231</name>
</gene>
<dbReference type="EC" id="3.5.4.5" evidence="1"/>
<dbReference type="EMBL" id="AE003852">
    <property type="protein sequence ID" value="AAF94390.1"/>
    <property type="molecule type" value="Genomic_DNA"/>
</dbReference>
<dbReference type="PIR" id="G82226">
    <property type="entry name" value="G82226"/>
</dbReference>
<dbReference type="RefSeq" id="NP_230876.1">
    <property type="nucleotide sequence ID" value="NC_002505.1"/>
</dbReference>
<dbReference type="RefSeq" id="WP_001245905.1">
    <property type="nucleotide sequence ID" value="NZ_LT906614.1"/>
</dbReference>
<dbReference type="PDB" id="4EG2">
    <property type="method" value="X-ray"/>
    <property type="resolution" value="2.20 A"/>
    <property type="chains" value="A/B/C/D/E/F/G/H=1-295"/>
</dbReference>
<dbReference type="PDBsum" id="4EG2"/>
<dbReference type="SMR" id="Q9KSM5"/>
<dbReference type="STRING" id="243277.VC_1231"/>
<dbReference type="DNASU" id="2614668"/>
<dbReference type="EnsemblBacteria" id="AAF94390">
    <property type="protein sequence ID" value="AAF94390"/>
    <property type="gene ID" value="VC_1231"/>
</dbReference>
<dbReference type="GeneID" id="89514198"/>
<dbReference type="KEGG" id="vch:VC_1231"/>
<dbReference type="PATRIC" id="fig|243277.26.peg.1173"/>
<dbReference type="eggNOG" id="COG0295">
    <property type="taxonomic scope" value="Bacteria"/>
</dbReference>
<dbReference type="HOGENOM" id="CLU_052424_0_0_6"/>
<dbReference type="EvolutionaryTrace" id="Q9KSM5"/>
<dbReference type="Proteomes" id="UP000000584">
    <property type="component" value="Chromosome 1"/>
</dbReference>
<dbReference type="GO" id="GO:0005829">
    <property type="term" value="C:cytosol"/>
    <property type="evidence" value="ECO:0000318"/>
    <property type="project" value="GO_Central"/>
</dbReference>
<dbReference type="GO" id="GO:0004126">
    <property type="term" value="F:cytidine deaminase activity"/>
    <property type="evidence" value="ECO:0000318"/>
    <property type="project" value="GO_Central"/>
</dbReference>
<dbReference type="GO" id="GO:0042802">
    <property type="term" value="F:identical protein binding"/>
    <property type="evidence" value="ECO:0007669"/>
    <property type="project" value="UniProtKB-ARBA"/>
</dbReference>
<dbReference type="GO" id="GO:0008270">
    <property type="term" value="F:zinc ion binding"/>
    <property type="evidence" value="ECO:0000318"/>
    <property type="project" value="GO_Central"/>
</dbReference>
<dbReference type="GO" id="GO:0009972">
    <property type="term" value="P:cytidine deamination"/>
    <property type="evidence" value="ECO:0000318"/>
    <property type="project" value="GO_Central"/>
</dbReference>
<dbReference type="CDD" id="cd01283">
    <property type="entry name" value="cytidine_deaminase"/>
    <property type="match status" value="2"/>
</dbReference>
<dbReference type="FunFam" id="3.40.140.10:FF:000007">
    <property type="entry name" value="Cytidine deaminase"/>
    <property type="match status" value="1"/>
</dbReference>
<dbReference type="Gene3D" id="3.40.140.10">
    <property type="entry name" value="Cytidine Deaminase, domain 2"/>
    <property type="match status" value="2"/>
</dbReference>
<dbReference type="HAMAP" id="MF_01558">
    <property type="entry name" value="Cyt_deam"/>
    <property type="match status" value="1"/>
</dbReference>
<dbReference type="InterPro" id="IPR016192">
    <property type="entry name" value="APOBEC/CMP_deaminase_Zn-bd"/>
</dbReference>
<dbReference type="InterPro" id="IPR002125">
    <property type="entry name" value="CMP_dCMP_dom"/>
</dbReference>
<dbReference type="InterPro" id="IPR013171">
    <property type="entry name" value="Cyd/dCyd_deaminase_Zn-bd"/>
</dbReference>
<dbReference type="InterPro" id="IPR050202">
    <property type="entry name" value="Cyt/Deoxycyt_deaminase"/>
</dbReference>
<dbReference type="InterPro" id="IPR006263">
    <property type="entry name" value="Cyt_deam_dimer"/>
</dbReference>
<dbReference type="InterPro" id="IPR016193">
    <property type="entry name" value="Cytidine_deaminase-like"/>
</dbReference>
<dbReference type="InterPro" id="IPR020797">
    <property type="entry name" value="Cytidine_deaminase_bacteria"/>
</dbReference>
<dbReference type="NCBIfam" id="TIGR01355">
    <property type="entry name" value="cyt_deam_dimer"/>
    <property type="match status" value="1"/>
</dbReference>
<dbReference type="NCBIfam" id="NF006537">
    <property type="entry name" value="PRK09027.1"/>
    <property type="match status" value="1"/>
</dbReference>
<dbReference type="PANTHER" id="PTHR11644">
    <property type="entry name" value="CYTIDINE DEAMINASE"/>
    <property type="match status" value="1"/>
</dbReference>
<dbReference type="PANTHER" id="PTHR11644:SF2">
    <property type="entry name" value="CYTIDINE DEAMINASE"/>
    <property type="match status" value="1"/>
</dbReference>
<dbReference type="Pfam" id="PF00383">
    <property type="entry name" value="dCMP_cyt_deam_1"/>
    <property type="match status" value="1"/>
</dbReference>
<dbReference type="Pfam" id="PF08211">
    <property type="entry name" value="dCMP_cyt_deam_2"/>
    <property type="match status" value="1"/>
</dbReference>
<dbReference type="PIRSF" id="PIRSF006334">
    <property type="entry name" value="Cdd_plus_pseudo"/>
    <property type="match status" value="1"/>
</dbReference>
<dbReference type="SUPFAM" id="SSF53927">
    <property type="entry name" value="Cytidine deaminase-like"/>
    <property type="match status" value="2"/>
</dbReference>
<dbReference type="PROSITE" id="PS00903">
    <property type="entry name" value="CYT_DCMP_DEAMINASES_1"/>
    <property type="match status" value="1"/>
</dbReference>
<dbReference type="PROSITE" id="PS51747">
    <property type="entry name" value="CYT_DCMP_DEAMINASES_2"/>
    <property type="match status" value="2"/>
</dbReference>
<keyword id="KW-0002">3D-structure</keyword>
<keyword id="KW-0378">Hydrolase</keyword>
<keyword id="KW-0479">Metal-binding</keyword>
<keyword id="KW-1185">Reference proteome</keyword>
<keyword id="KW-0862">Zinc</keyword>
<name>CDD_VIBCH</name>
<evidence type="ECO:0000255" key="1">
    <source>
        <dbReference type="HAMAP-Rule" id="MF_01558"/>
    </source>
</evidence>
<evidence type="ECO:0000255" key="2">
    <source>
        <dbReference type="PROSITE-ProRule" id="PRU01083"/>
    </source>
</evidence>
<evidence type="ECO:0007829" key="3">
    <source>
        <dbReference type="PDB" id="4EG2"/>
    </source>
</evidence>
<reference key="1">
    <citation type="journal article" date="2000" name="Nature">
        <title>DNA sequence of both chromosomes of the cholera pathogen Vibrio cholerae.</title>
        <authorList>
            <person name="Heidelberg J.F."/>
            <person name="Eisen J.A."/>
            <person name="Nelson W.C."/>
            <person name="Clayton R.A."/>
            <person name="Gwinn M.L."/>
            <person name="Dodson R.J."/>
            <person name="Haft D.H."/>
            <person name="Hickey E.K."/>
            <person name="Peterson J.D."/>
            <person name="Umayam L.A."/>
            <person name="Gill S.R."/>
            <person name="Nelson K.E."/>
            <person name="Read T.D."/>
            <person name="Tettelin H."/>
            <person name="Richardson D.L."/>
            <person name="Ermolaeva M.D."/>
            <person name="Vamathevan J.J."/>
            <person name="Bass S."/>
            <person name="Qin H."/>
            <person name="Dragoi I."/>
            <person name="Sellers P."/>
            <person name="McDonald L.A."/>
            <person name="Utterback T.R."/>
            <person name="Fleischmann R.D."/>
            <person name="Nierman W.C."/>
            <person name="White O."/>
            <person name="Salzberg S.L."/>
            <person name="Smith H.O."/>
            <person name="Colwell R.R."/>
            <person name="Mekalanos J.J."/>
            <person name="Venter J.C."/>
            <person name="Fraser C.M."/>
        </authorList>
    </citation>
    <scope>NUCLEOTIDE SEQUENCE [LARGE SCALE GENOMIC DNA]</scope>
    <source>
        <strain>ATCC 39315 / El Tor Inaba N16961</strain>
    </source>
</reference>
<proteinExistence type="evidence at protein level"/>
<accession>Q9KSM5</accession>
<organism>
    <name type="scientific">Vibrio cholerae serotype O1 (strain ATCC 39315 / El Tor Inaba N16961)</name>
    <dbReference type="NCBI Taxonomy" id="243277"/>
    <lineage>
        <taxon>Bacteria</taxon>
        <taxon>Pseudomonadati</taxon>
        <taxon>Pseudomonadota</taxon>
        <taxon>Gammaproteobacteria</taxon>
        <taxon>Vibrionales</taxon>
        <taxon>Vibrionaceae</taxon>
        <taxon>Vibrio</taxon>
    </lineage>
</organism>
<comment type="function">
    <text evidence="1">This enzyme scavenges exogenous and endogenous cytidine and 2'-deoxycytidine for UMP synthesis.</text>
</comment>
<comment type="catalytic activity">
    <reaction evidence="1">
        <text>cytidine + H2O + H(+) = uridine + NH4(+)</text>
        <dbReference type="Rhea" id="RHEA:16069"/>
        <dbReference type="ChEBI" id="CHEBI:15377"/>
        <dbReference type="ChEBI" id="CHEBI:15378"/>
        <dbReference type="ChEBI" id="CHEBI:16704"/>
        <dbReference type="ChEBI" id="CHEBI:17562"/>
        <dbReference type="ChEBI" id="CHEBI:28938"/>
        <dbReference type="EC" id="3.5.4.5"/>
    </reaction>
</comment>
<comment type="catalytic activity">
    <reaction evidence="1">
        <text>2'-deoxycytidine + H2O + H(+) = 2'-deoxyuridine + NH4(+)</text>
        <dbReference type="Rhea" id="RHEA:13433"/>
        <dbReference type="ChEBI" id="CHEBI:15377"/>
        <dbReference type="ChEBI" id="CHEBI:15378"/>
        <dbReference type="ChEBI" id="CHEBI:15698"/>
        <dbReference type="ChEBI" id="CHEBI:16450"/>
        <dbReference type="ChEBI" id="CHEBI:28938"/>
        <dbReference type="EC" id="3.5.4.5"/>
    </reaction>
</comment>
<comment type="cofactor">
    <cofactor evidence="1">
        <name>Zn(2+)</name>
        <dbReference type="ChEBI" id="CHEBI:29105"/>
    </cofactor>
    <text evidence="1">Binds 1 zinc ion.</text>
</comment>
<comment type="subunit">
    <text evidence="1">Homodimer.</text>
</comment>
<comment type="similarity">
    <text evidence="1">Belongs to the cytidine and deoxycytidylate deaminase family.</text>
</comment>
<feature type="chain" id="PRO_0000171669" description="Cytidine deaminase">
    <location>
        <begin position="1"/>
        <end position="295"/>
    </location>
</feature>
<feature type="domain" description="CMP/dCMP-type deaminase 1" evidence="2">
    <location>
        <begin position="48"/>
        <end position="168"/>
    </location>
</feature>
<feature type="domain" description="CMP/dCMP-type deaminase 2" evidence="2">
    <location>
        <begin position="187"/>
        <end position="295"/>
    </location>
</feature>
<feature type="active site" description="Proton donor" evidence="1">
    <location>
        <position position="104"/>
    </location>
</feature>
<feature type="binding site" evidence="1">
    <location>
        <begin position="89"/>
        <end position="91"/>
    </location>
    <ligand>
        <name>substrate</name>
    </ligand>
</feature>
<feature type="binding site" evidence="1">
    <location>
        <position position="102"/>
    </location>
    <ligand>
        <name>Zn(2+)</name>
        <dbReference type="ChEBI" id="CHEBI:29105"/>
        <note>catalytic</note>
    </ligand>
</feature>
<feature type="binding site" evidence="1">
    <location>
        <position position="129"/>
    </location>
    <ligand>
        <name>Zn(2+)</name>
        <dbReference type="ChEBI" id="CHEBI:29105"/>
        <note>catalytic</note>
    </ligand>
</feature>
<feature type="binding site" evidence="1">
    <location>
        <position position="132"/>
    </location>
    <ligand>
        <name>Zn(2+)</name>
        <dbReference type="ChEBI" id="CHEBI:29105"/>
        <note>catalytic</note>
    </ligand>
</feature>
<feature type="helix" evidence="3">
    <location>
        <begin position="2"/>
        <end position="11"/>
    </location>
</feature>
<feature type="turn" evidence="3">
    <location>
        <begin position="14"/>
        <end position="16"/>
    </location>
</feature>
<feature type="helix" evidence="3">
    <location>
        <begin position="17"/>
        <end position="24"/>
    </location>
</feature>
<feature type="strand" evidence="3">
    <location>
        <begin position="31"/>
        <end position="33"/>
    </location>
</feature>
<feature type="helix" evidence="3">
    <location>
        <begin position="35"/>
        <end position="45"/>
    </location>
</feature>
<feature type="helix" evidence="3">
    <location>
        <begin position="49"/>
        <end position="61"/>
    </location>
</feature>
<feature type="turn" evidence="3">
    <location>
        <begin position="67"/>
        <end position="69"/>
    </location>
</feature>
<feature type="strand" evidence="3">
    <location>
        <begin position="74"/>
        <end position="79"/>
    </location>
</feature>
<feature type="strand" evidence="3">
    <location>
        <begin position="84"/>
        <end position="88"/>
    </location>
</feature>
<feature type="helix" evidence="3">
    <location>
        <begin position="97"/>
        <end position="99"/>
    </location>
</feature>
<feature type="helix" evidence="3">
    <location>
        <begin position="103"/>
        <end position="113"/>
    </location>
</feature>
<feature type="strand" evidence="3">
    <location>
        <begin position="119"/>
        <end position="126"/>
    </location>
</feature>
<feature type="helix" evidence="3">
    <location>
        <begin position="130"/>
        <end position="136"/>
    </location>
</feature>
<feature type="turn" evidence="3">
    <location>
        <begin position="140"/>
        <end position="144"/>
    </location>
</feature>
<feature type="strand" evidence="3">
    <location>
        <begin position="146"/>
        <end position="148"/>
    </location>
</feature>
<feature type="strand" evidence="3">
    <location>
        <begin position="150"/>
        <end position="152"/>
    </location>
</feature>
<feature type="helix" evidence="3">
    <location>
        <begin position="157"/>
        <end position="160"/>
    </location>
</feature>
<feature type="helix" evidence="3">
    <location>
        <begin position="167"/>
        <end position="170"/>
    </location>
</feature>
<feature type="helix" evidence="3">
    <location>
        <begin position="191"/>
        <end position="200"/>
    </location>
</feature>
<feature type="turn" evidence="3">
    <location>
        <begin position="206"/>
        <end position="208"/>
    </location>
</feature>
<feature type="strand" evidence="3">
    <location>
        <begin position="212"/>
        <end position="218"/>
    </location>
</feature>
<feature type="strand" evidence="3">
    <location>
        <begin position="223"/>
        <end position="227"/>
    </location>
</feature>
<feature type="helix" evidence="3">
    <location>
        <begin position="240"/>
        <end position="250"/>
    </location>
</feature>
<feature type="helix" evidence="3">
    <location>
        <begin position="255"/>
        <end position="257"/>
    </location>
</feature>
<feature type="strand" evidence="3">
    <location>
        <begin position="258"/>
        <end position="265"/>
    </location>
</feature>
<feature type="helix" evidence="3">
    <location>
        <begin position="274"/>
        <end position="284"/>
    </location>
</feature>
<feature type="strand" evidence="3">
    <location>
        <begin position="290"/>
        <end position="294"/>
    </location>
</feature>